<reference key="1">
    <citation type="journal article" date="1996" name="Science">
        <title>Genome sequence of a human tumorigenic poxvirus: prediction of specific host response-evasion genes.</title>
        <authorList>
            <person name="Senkevich T.G."/>
            <person name="Bugert J.J."/>
            <person name="Sisler J.R."/>
            <person name="Koonin E.V."/>
            <person name="Darai G."/>
            <person name="Moss B."/>
        </authorList>
    </citation>
    <scope>NUCLEOTIDE SEQUENCE [LARGE SCALE GENOMIC DNA]</scope>
</reference>
<reference key="2">
    <citation type="journal article" date="1997" name="Virus Genes">
        <title>A random DNA sequencing, computer-based approach for the generation of a gene map of Molluscum contagiosum virus.</title>
        <authorList>
            <person name="Moratilla M."/>
            <person name="Agromayor M."/>
            <person name="Nunez A."/>
            <person name="Funes J.M."/>
            <person name="Varas A.J."/>
            <person name="Lopez-Estebaranz J.L."/>
            <person name="Esteban M."/>
            <person name="Martin-Gallardo A."/>
        </authorList>
    </citation>
    <scope>NUCLEOTIDE SEQUENCE [LARGE SCALE GENOMIC DNA]</scope>
</reference>
<reference key="3">
    <citation type="journal article" date="2017" name="J. Gen. Virol.">
        <title>Recombination events and variability among full-length genomes of co-circulating molluscum contagiosum virus subtypes 1 and 2.</title>
        <authorList>
            <person name="Lopez-Bueno A."/>
            <person name="Parras-Molto M."/>
            <person name="Lopez-Barrantes O."/>
            <person name="Belda S."/>
            <person name="Alejo A."/>
        </authorList>
    </citation>
    <scope>NUCLEOTIDE SEQUENCE [LARGE SCALE GENOMIC DNA]</scope>
</reference>
<reference key="4">
    <citation type="journal article" date="1997" name="Proc. Natl. Acad. Sci. U.S.A.">
        <title>Functional characterization of the C---C chemokine-like molecules encoded by molluscum contagiosum virus types 1 and 2.</title>
        <authorList>
            <person name="Krathwohl M.D."/>
            <person name="Hromas R."/>
            <person name="Brown D.R."/>
            <person name="Broxmeyer H.E."/>
            <person name="Fife K.H."/>
        </authorList>
    </citation>
    <scope>FUNCTION</scope>
</reference>
<reference key="5">
    <citation type="journal article" date="1998" name="Proc. Natl. Acad. Sci. U.S.A.">
        <title>Broad spectrum chemokine antagonistic activity of a human poxvirus chemokine homolog.</title>
        <authorList>
            <person name="Damon I."/>
            <person name="Murphy P.M."/>
            <person name="Moss B."/>
        </authorList>
    </citation>
    <scope>FUNCTION</scope>
</reference>
<reference key="6">
    <citation type="journal article" date="2000" name="J. Exp. Med.">
        <title>A highly selective CC chemokine receptor (CCR)8 antagonist encoded by the poxvirus molluscum contagiosum.</title>
        <authorList>
            <person name="Luettichau H.R."/>
            <person name="Stine J."/>
            <person name="Boesen T.P."/>
            <person name="Johnsen A.H."/>
            <person name="Chantry D."/>
            <person name="Gerstoft J."/>
            <person name="Schwartz T.W."/>
        </authorList>
    </citation>
    <scope>FUNCTION</scope>
</reference>
<reference key="7">
    <citation type="journal article" date="2011" name="Virology">
        <title>Role for the conserved N-terminal cysteines in the anti-chemokine activities by the chemokine-like protein MC148R1 encoded by Molluscum contagiosum virus.</title>
        <authorList>
            <person name="Jin Q."/>
            <person name="Altenburg J.D."/>
            <person name="Hossain M.M."/>
            <person name="Alkhatib G."/>
        </authorList>
    </citation>
    <scope>FUNCTION</scope>
    <scope>INTERACTION WITH HOST CXCL12</scope>
</reference>
<proteinExistence type="evidence at protein level"/>
<feature type="chain" id="PRO_0000444801" description="Chemokine-like protein MC148">
    <location>
        <begin position="1"/>
        <end position="104"/>
    </location>
</feature>
<protein>
    <recommendedName>
        <fullName>Chemokine-like protein MC148</fullName>
    </recommendedName>
</protein>
<accession>Q98314</accession>
<accession>O12616</accession>
<accession>O12897</accession>
<evidence type="ECO:0000269" key="1">
    <source>
    </source>
</evidence>
<evidence type="ECO:0000269" key="2">
    <source>
    </source>
</evidence>
<evidence type="ECO:0000269" key="3">
    <source>
    </source>
</evidence>
<evidence type="ECO:0000269" key="4">
    <source>
    </source>
</evidence>
<gene>
    <name type="primary">MC148</name>
</gene>
<dbReference type="EMBL" id="U86945">
    <property type="protein sequence ID" value="AAB58019.1"/>
    <property type="molecule type" value="Genomic_DNA"/>
</dbReference>
<dbReference type="EMBL" id="U60315">
    <property type="protein sequence ID" value="AAC55276.1"/>
    <property type="molecule type" value="Genomic_DNA"/>
</dbReference>
<dbReference type="EMBL" id="KY040275">
    <property type="protein sequence ID" value="AQY16898.1"/>
    <property type="molecule type" value="Genomic_DNA"/>
</dbReference>
<dbReference type="EMBL" id="KY040277">
    <property type="protein sequence ID" value="AQY17256.1"/>
    <property type="molecule type" value="Genomic_DNA"/>
</dbReference>
<dbReference type="PIR" id="T30750">
    <property type="entry name" value="T30750"/>
</dbReference>
<dbReference type="SMR" id="Q98314"/>
<dbReference type="KEGG" id="vg:1487167"/>
<dbReference type="Proteomes" id="UP000000869">
    <property type="component" value="Genome"/>
</dbReference>
<dbReference type="GO" id="GO:0005576">
    <property type="term" value="C:extracellular region"/>
    <property type="evidence" value="ECO:0007669"/>
    <property type="project" value="InterPro"/>
</dbReference>
<dbReference type="GO" id="GO:0008009">
    <property type="term" value="F:chemokine activity"/>
    <property type="evidence" value="ECO:0007669"/>
    <property type="project" value="InterPro"/>
</dbReference>
<dbReference type="GO" id="GO:0005102">
    <property type="term" value="F:signaling receptor binding"/>
    <property type="evidence" value="ECO:0000314"/>
    <property type="project" value="UniProtKB"/>
</dbReference>
<dbReference type="GO" id="GO:0006955">
    <property type="term" value="P:immune response"/>
    <property type="evidence" value="ECO:0007669"/>
    <property type="project" value="InterPro"/>
</dbReference>
<dbReference type="GO" id="GO:0075111">
    <property type="term" value="P:symbiont-mediated suppression of host receptor-mediated signal transduction"/>
    <property type="evidence" value="ECO:0000314"/>
    <property type="project" value="UniProtKB"/>
</dbReference>
<dbReference type="GO" id="GO:0052029">
    <property type="term" value="P:symbiont-mediated suppression of host signal transduction pathway"/>
    <property type="evidence" value="ECO:0000314"/>
    <property type="project" value="UniProtKB"/>
</dbReference>
<dbReference type="Gene3D" id="2.40.50.40">
    <property type="match status" value="1"/>
</dbReference>
<dbReference type="InterPro" id="IPR001811">
    <property type="entry name" value="Chemokine_IL8-like_dom"/>
</dbReference>
<dbReference type="InterPro" id="IPR036048">
    <property type="entry name" value="Interleukin_8-like_sf"/>
</dbReference>
<dbReference type="Pfam" id="PF00048">
    <property type="entry name" value="IL8"/>
    <property type="match status" value="1"/>
</dbReference>
<dbReference type="SUPFAM" id="SSF54117">
    <property type="entry name" value="Interleukin 8-like chemokines"/>
    <property type="match status" value="1"/>
</dbReference>
<organismHost>
    <name type="scientific">Homo sapiens</name>
    <name type="common">Human</name>
    <dbReference type="NCBI Taxonomy" id="9606"/>
</organismHost>
<keyword id="KW-0945">Host-virus interaction</keyword>
<keyword id="KW-1086">Inhibition of host chemokines by virus</keyword>
<keyword id="KW-1185">Reference proteome</keyword>
<keyword id="KW-0899">Viral immunoevasion</keyword>
<name>MC148_MCV1</name>
<sequence length="104" mass="11471">MRGGDVFASVVLMLLLALPRPGVSLARRKCCLNPTNRPIPNPLLQDLSRVDYQAIGHDCGREAFRVTLQDGRQGCVSVGNKSLLDWLRGHKDLCPQIWSGCESL</sequence>
<organism>
    <name type="scientific">Molluscum contagiosum virus subtype 1</name>
    <name type="common">MOCV</name>
    <name type="synonym">MCVI</name>
    <dbReference type="NCBI Taxonomy" id="10280"/>
    <lineage>
        <taxon>Viruses</taxon>
        <taxon>Varidnaviria</taxon>
        <taxon>Bamfordvirae</taxon>
        <taxon>Nucleocytoviricota</taxon>
        <taxon>Pokkesviricetes</taxon>
        <taxon>Chitovirales</taxon>
        <taxon>Poxviridae</taxon>
        <taxon>Chordopoxvirinae</taxon>
        <taxon>Molluscipoxvirus</taxon>
        <taxon>Molluscum contagiosum virus</taxon>
    </lineage>
</organism>
<comment type="function">
    <text evidence="1 2 3 4">Plays a role in antagonizing the chemotaxis of multiple leukocyte subsets induced by CC and CXC chemokines. Displaces the interaction between CXCL12 and CXCR4 and thereby inactivates the antiviral activity of host CXCL12 (PubMed:21802105).</text>
</comment>
<comment type="subunit">
    <text evidence="2">Interacts with host CXCL12.</text>
</comment>